<reference key="1">
    <citation type="journal article" date="2007" name="PLoS ONE">
        <title>Genome sequencing shows that European isolates of Francisella tularensis subspecies tularensis are almost identical to US laboratory strain Schu S4.</title>
        <authorList>
            <person name="Chaudhuri R.R."/>
            <person name="Ren C.-P."/>
            <person name="Desmond L."/>
            <person name="Vincent G.A."/>
            <person name="Silman N.J."/>
            <person name="Brehm J.K."/>
            <person name="Elmore M.J."/>
            <person name="Hudson M.J."/>
            <person name="Forsman M."/>
            <person name="Isherwood K.E."/>
            <person name="Gurycova D."/>
            <person name="Minton N.P."/>
            <person name="Titball R.W."/>
            <person name="Pallen M.J."/>
            <person name="Vipond R."/>
        </authorList>
    </citation>
    <scope>NUCLEOTIDE SEQUENCE [LARGE SCALE GENOMIC DNA]</scope>
    <source>
        <strain>FSC 198</strain>
    </source>
</reference>
<comment type="function">
    <text evidence="1">May play a role in DNA repair. It seems to be involved in an RecBC-independent recombinational process of DNA repair. It may act with RecF and RecO.</text>
</comment>
<comment type="similarity">
    <text evidence="1">Belongs to the RecR family.</text>
</comment>
<proteinExistence type="inferred from homology"/>
<gene>
    <name evidence="1" type="primary">recR</name>
    <name type="ordered locus">FTF0809c</name>
</gene>
<name>RECR_FRAT1</name>
<dbReference type="EMBL" id="AM286280">
    <property type="protein sequence ID" value="CAL08825.1"/>
    <property type="molecule type" value="Genomic_DNA"/>
</dbReference>
<dbReference type="RefSeq" id="WP_003020731.1">
    <property type="nucleotide sequence ID" value="NC_008245.1"/>
</dbReference>
<dbReference type="SMR" id="Q14I28"/>
<dbReference type="KEGG" id="ftf:FTF0809c"/>
<dbReference type="HOGENOM" id="CLU_060739_1_2_6"/>
<dbReference type="GO" id="GO:0003677">
    <property type="term" value="F:DNA binding"/>
    <property type="evidence" value="ECO:0007669"/>
    <property type="project" value="UniProtKB-UniRule"/>
</dbReference>
<dbReference type="GO" id="GO:0008270">
    <property type="term" value="F:zinc ion binding"/>
    <property type="evidence" value="ECO:0007669"/>
    <property type="project" value="UniProtKB-KW"/>
</dbReference>
<dbReference type="GO" id="GO:0006310">
    <property type="term" value="P:DNA recombination"/>
    <property type="evidence" value="ECO:0007669"/>
    <property type="project" value="UniProtKB-UniRule"/>
</dbReference>
<dbReference type="GO" id="GO:0006281">
    <property type="term" value="P:DNA repair"/>
    <property type="evidence" value="ECO:0007669"/>
    <property type="project" value="UniProtKB-UniRule"/>
</dbReference>
<dbReference type="CDD" id="cd01025">
    <property type="entry name" value="TOPRIM_recR"/>
    <property type="match status" value="1"/>
</dbReference>
<dbReference type="Gene3D" id="3.40.1360.10">
    <property type="match status" value="1"/>
</dbReference>
<dbReference type="Gene3D" id="6.10.250.240">
    <property type="match status" value="1"/>
</dbReference>
<dbReference type="Gene3D" id="1.10.8.420">
    <property type="entry name" value="RecR Domain 1"/>
    <property type="match status" value="1"/>
</dbReference>
<dbReference type="HAMAP" id="MF_00017">
    <property type="entry name" value="RecR"/>
    <property type="match status" value="1"/>
</dbReference>
<dbReference type="InterPro" id="IPR000093">
    <property type="entry name" value="DNA_Rcmb_RecR"/>
</dbReference>
<dbReference type="InterPro" id="IPR023627">
    <property type="entry name" value="Rcmb_RecR"/>
</dbReference>
<dbReference type="InterPro" id="IPR015967">
    <property type="entry name" value="Rcmb_RecR_Znf"/>
</dbReference>
<dbReference type="InterPro" id="IPR006171">
    <property type="entry name" value="TOPRIM_dom"/>
</dbReference>
<dbReference type="InterPro" id="IPR034137">
    <property type="entry name" value="TOPRIM_RecR"/>
</dbReference>
<dbReference type="NCBIfam" id="TIGR00615">
    <property type="entry name" value="recR"/>
    <property type="match status" value="1"/>
</dbReference>
<dbReference type="PANTHER" id="PTHR30446">
    <property type="entry name" value="RECOMBINATION PROTEIN RECR"/>
    <property type="match status" value="1"/>
</dbReference>
<dbReference type="PANTHER" id="PTHR30446:SF0">
    <property type="entry name" value="RECOMBINATION PROTEIN RECR"/>
    <property type="match status" value="1"/>
</dbReference>
<dbReference type="Pfam" id="PF21175">
    <property type="entry name" value="RecR_C"/>
    <property type="match status" value="1"/>
</dbReference>
<dbReference type="Pfam" id="PF21176">
    <property type="entry name" value="RecR_HhH"/>
    <property type="match status" value="1"/>
</dbReference>
<dbReference type="Pfam" id="PF02132">
    <property type="entry name" value="RecR_ZnF"/>
    <property type="match status" value="1"/>
</dbReference>
<dbReference type="Pfam" id="PF13662">
    <property type="entry name" value="Toprim_4"/>
    <property type="match status" value="1"/>
</dbReference>
<dbReference type="SMART" id="SM00493">
    <property type="entry name" value="TOPRIM"/>
    <property type="match status" value="1"/>
</dbReference>
<dbReference type="SUPFAM" id="SSF111304">
    <property type="entry name" value="Recombination protein RecR"/>
    <property type="match status" value="1"/>
</dbReference>
<dbReference type="PROSITE" id="PS01300">
    <property type="entry name" value="RECR"/>
    <property type="match status" value="1"/>
</dbReference>
<dbReference type="PROSITE" id="PS50880">
    <property type="entry name" value="TOPRIM"/>
    <property type="match status" value="1"/>
</dbReference>
<organism>
    <name type="scientific">Francisella tularensis subsp. tularensis (strain FSC 198)</name>
    <dbReference type="NCBI Taxonomy" id="393115"/>
    <lineage>
        <taxon>Bacteria</taxon>
        <taxon>Pseudomonadati</taxon>
        <taxon>Pseudomonadota</taxon>
        <taxon>Gammaproteobacteria</taxon>
        <taxon>Thiotrichales</taxon>
        <taxon>Francisellaceae</taxon>
        <taxon>Francisella</taxon>
    </lineage>
</organism>
<sequence>MTSKIFSPKISAVIESLRKLPTIGKKSSQRLALYLLDKSPETAIAIANSLLDATANIKKCVYCQALTEDDVCNICSNTNRDNTKLCIIESMLDMIAIEEAGIYRGKYFVLNGRISPLDGIGPSELKLDILQQIIADRKIDEVILAISPTVEGETTAHFISQMIAKDIKISRIGFGVPFGGELEYLDQQTLLHAFNARTNI</sequence>
<keyword id="KW-0227">DNA damage</keyword>
<keyword id="KW-0233">DNA recombination</keyword>
<keyword id="KW-0234">DNA repair</keyword>
<keyword id="KW-0479">Metal-binding</keyword>
<keyword id="KW-0862">Zinc</keyword>
<keyword id="KW-0863">Zinc-finger</keyword>
<evidence type="ECO:0000255" key="1">
    <source>
        <dbReference type="HAMAP-Rule" id="MF_00017"/>
    </source>
</evidence>
<protein>
    <recommendedName>
        <fullName evidence="1">Recombination protein RecR</fullName>
    </recommendedName>
</protein>
<accession>Q14I28</accession>
<feature type="chain" id="PRO_1000001540" description="Recombination protein RecR">
    <location>
        <begin position="1"/>
        <end position="200"/>
    </location>
</feature>
<feature type="domain" description="Toprim" evidence="1">
    <location>
        <begin position="83"/>
        <end position="177"/>
    </location>
</feature>
<feature type="zinc finger region" description="C4-type" evidence="1">
    <location>
        <begin position="60"/>
        <end position="75"/>
    </location>
</feature>